<protein>
    <recommendedName>
        <fullName>Protein kinase-like protein SCY1</fullName>
    </recommendedName>
</protein>
<evidence type="ECO:0000255" key="1">
    <source>
        <dbReference type="PROSITE-ProRule" id="PRU00159"/>
    </source>
</evidence>
<evidence type="ECO:0000256" key="2">
    <source>
        <dbReference type="SAM" id="MobiDB-lite"/>
    </source>
</evidence>
<evidence type="ECO:0000269" key="3">
    <source>
    </source>
</evidence>
<comment type="domain">
    <text>The protein kinase domain is predicted to be catalytically inactive.</text>
</comment>
<comment type="miscellaneous">
    <text evidence="3">Present with 1480 molecules/cell in log phase SD medium.</text>
</comment>
<reference key="1">
    <citation type="submission" date="1996-04" db="EMBL/GenBank/DDBJ databases">
        <authorList>
            <person name="Pietsch M."/>
            <person name="Gallwitz D."/>
        </authorList>
    </citation>
    <scope>NUCLEOTIDE SEQUENCE [GENOMIC DNA]</scope>
</reference>
<reference key="2">
    <citation type="journal article" date="1997" name="Yeast">
        <title>Sequence analysis of 203 kilobases from Saccharomyces cerevisiae chromosome VII.</title>
        <authorList>
            <person name="Rieger M."/>
            <person name="Brueckner M."/>
            <person name="Schaefer M."/>
            <person name="Mueller-Auer S."/>
        </authorList>
    </citation>
    <scope>NUCLEOTIDE SEQUENCE [GENOMIC DNA]</scope>
    <source>
        <strain>ATCC 204508 / S288c</strain>
    </source>
</reference>
<reference key="3">
    <citation type="journal article" date="1997" name="Nature">
        <title>The nucleotide sequence of Saccharomyces cerevisiae chromosome VII.</title>
        <authorList>
            <person name="Tettelin H."/>
            <person name="Agostoni-Carbone M.L."/>
            <person name="Albermann K."/>
            <person name="Albers M."/>
            <person name="Arroyo J."/>
            <person name="Backes U."/>
            <person name="Barreiros T."/>
            <person name="Bertani I."/>
            <person name="Bjourson A.J."/>
            <person name="Brueckner M."/>
            <person name="Bruschi C.V."/>
            <person name="Carignani G."/>
            <person name="Castagnoli L."/>
            <person name="Cerdan E."/>
            <person name="Clemente M.L."/>
            <person name="Coblenz A."/>
            <person name="Coglievina M."/>
            <person name="Coissac E."/>
            <person name="Defoor E."/>
            <person name="Del Bino S."/>
            <person name="Delius H."/>
            <person name="Delneri D."/>
            <person name="de Wergifosse P."/>
            <person name="Dujon B."/>
            <person name="Durand P."/>
            <person name="Entian K.-D."/>
            <person name="Eraso P."/>
            <person name="Escribano V."/>
            <person name="Fabiani L."/>
            <person name="Fartmann B."/>
            <person name="Feroli F."/>
            <person name="Feuermann M."/>
            <person name="Frontali L."/>
            <person name="Garcia-Gonzalez M."/>
            <person name="Garcia-Saez M.I."/>
            <person name="Goffeau A."/>
            <person name="Guerreiro P."/>
            <person name="Hani J."/>
            <person name="Hansen M."/>
            <person name="Hebling U."/>
            <person name="Hernandez K."/>
            <person name="Heumann K."/>
            <person name="Hilger F."/>
            <person name="Hofmann B."/>
            <person name="Indge K.J."/>
            <person name="James C.M."/>
            <person name="Klima R."/>
            <person name="Koetter P."/>
            <person name="Kramer B."/>
            <person name="Kramer W."/>
            <person name="Lauquin G."/>
            <person name="Leuther H."/>
            <person name="Louis E.J."/>
            <person name="Maillier E."/>
            <person name="Marconi A."/>
            <person name="Martegani E."/>
            <person name="Mazon M.J."/>
            <person name="Mazzoni C."/>
            <person name="McReynolds A.D.K."/>
            <person name="Melchioretto P."/>
            <person name="Mewes H.-W."/>
            <person name="Minenkova O."/>
            <person name="Mueller-Auer S."/>
            <person name="Nawrocki A."/>
            <person name="Netter P."/>
            <person name="Neu R."/>
            <person name="Nombela C."/>
            <person name="Oliver S.G."/>
            <person name="Panzeri L."/>
            <person name="Paoluzi S."/>
            <person name="Plevani P."/>
            <person name="Portetelle D."/>
            <person name="Portillo F."/>
            <person name="Potier S."/>
            <person name="Purnelle B."/>
            <person name="Rieger M."/>
            <person name="Riles L."/>
            <person name="Rinaldi T."/>
            <person name="Robben J."/>
            <person name="Rodrigues-Pousada C."/>
            <person name="Rodriguez-Belmonte E."/>
            <person name="Rodriguez-Torres A.M."/>
            <person name="Rose M."/>
            <person name="Ruzzi M."/>
            <person name="Saliola M."/>
            <person name="Sanchez-Perez M."/>
            <person name="Schaefer B."/>
            <person name="Schaefer M."/>
            <person name="Scharfe M."/>
            <person name="Schmidheini T."/>
            <person name="Schreer A."/>
            <person name="Skala J."/>
            <person name="Souciet J.-L."/>
            <person name="Steensma H.Y."/>
            <person name="Talla E."/>
            <person name="Thierry A."/>
            <person name="Vandenbol M."/>
            <person name="van der Aart Q.J.M."/>
            <person name="Van Dyck L."/>
            <person name="Vanoni M."/>
            <person name="Verhasselt P."/>
            <person name="Voet M."/>
            <person name="Volckaert G."/>
            <person name="Wambutt R."/>
            <person name="Watson M.D."/>
            <person name="Weber N."/>
            <person name="Wedler E."/>
            <person name="Wedler H."/>
            <person name="Wipfli P."/>
            <person name="Wolf K."/>
            <person name="Wright L.F."/>
            <person name="Zaccaria P."/>
            <person name="Zimmermann M."/>
            <person name="Zollner A."/>
            <person name="Kleine K."/>
        </authorList>
    </citation>
    <scope>NUCLEOTIDE SEQUENCE [LARGE SCALE GENOMIC DNA]</scope>
    <source>
        <strain>ATCC 204508 / S288c</strain>
    </source>
</reference>
<reference key="4">
    <citation type="journal article" date="2014" name="G3 (Bethesda)">
        <title>The reference genome sequence of Saccharomyces cerevisiae: Then and now.</title>
        <authorList>
            <person name="Engel S.R."/>
            <person name="Dietrich F.S."/>
            <person name="Fisk D.G."/>
            <person name="Binkley G."/>
            <person name="Balakrishnan R."/>
            <person name="Costanzo M.C."/>
            <person name="Dwight S.S."/>
            <person name="Hitz B.C."/>
            <person name="Karra K."/>
            <person name="Nash R.S."/>
            <person name="Weng S."/>
            <person name="Wong E.D."/>
            <person name="Lloyd P."/>
            <person name="Skrzypek M.S."/>
            <person name="Miyasato S.R."/>
            <person name="Simison M."/>
            <person name="Cherry J.M."/>
        </authorList>
    </citation>
    <scope>GENOME REANNOTATION</scope>
    <source>
        <strain>ATCC 204508 / S288c</strain>
    </source>
</reference>
<reference key="5">
    <citation type="journal article" date="2003" name="Nature">
        <title>Global analysis of protein expression in yeast.</title>
        <authorList>
            <person name="Ghaemmaghami S."/>
            <person name="Huh W.-K."/>
            <person name="Bower K."/>
            <person name="Howson R.W."/>
            <person name="Belle A."/>
            <person name="Dephoure N."/>
            <person name="O'Shea E.K."/>
            <person name="Weissman J.S."/>
        </authorList>
    </citation>
    <scope>LEVEL OF PROTEIN EXPRESSION [LARGE SCALE ANALYSIS]</scope>
</reference>
<gene>
    <name type="primary">SCY1</name>
    <name type="ordered locus">YGL083W</name>
</gene>
<organism>
    <name type="scientific">Saccharomyces cerevisiae (strain ATCC 204508 / S288c)</name>
    <name type="common">Baker's yeast</name>
    <dbReference type="NCBI Taxonomy" id="559292"/>
    <lineage>
        <taxon>Eukaryota</taxon>
        <taxon>Fungi</taxon>
        <taxon>Dikarya</taxon>
        <taxon>Ascomycota</taxon>
        <taxon>Saccharomycotina</taxon>
        <taxon>Saccharomycetes</taxon>
        <taxon>Saccharomycetales</taxon>
        <taxon>Saccharomycetaceae</taxon>
        <taxon>Saccharomyces</taxon>
    </lineage>
</organism>
<keyword id="KW-1185">Reference proteome</keyword>
<feature type="chain" id="PRO_0000097636" description="Protein kinase-like protein SCY1">
    <location>
        <begin position="1"/>
        <end position="804"/>
    </location>
</feature>
<feature type="domain" description="Protein kinase" evidence="1">
    <location>
        <begin position="1"/>
        <end position="324"/>
    </location>
</feature>
<feature type="region of interest" description="Disordered" evidence="2">
    <location>
        <begin position="666"/>
        <end position="804"/>
    </location>
</feature>
<feature type="compositionally biased region" description="Polar residues" evidence="2">
    <location>
        <begin position="667"/>
        <end position="685"/>
    </location>
</feature>
<feature type="compositionally biased region" description="Polar residues" evidence="2">
    <location>
        <begin position="701"/>
        <end position="729"/>
    </location>
</feature>
<feature type="compositionally biased region" description="Polar residues" evidence="2">
    <location>
        <begin position="744"/>
        <end position="759"/>
    </location>
</feature>
<feature type="compositionally biased region" description="Low complexity" evidence="2">
    <location>
        <begin position="760"/>
        <end position="776"/>
    </location>
</feature>
<name>SCY1_YEAST</name>
<accession>P53009</accession>
<accession>D6VU61</accession>
<dbReference type="EMBL" id="X97305">
    <property type="protein sequence ID" value="CAA65975.1"/>
    <property type="molecule type" value="Genomic_DNA"/>
</dbReference>
<dbReference type="EMBL" id="Z72605">
    <property type="protein sequence ID" value="CAA96788.1"/>
    <property type="molecule type" value="Genomic_DNA"/>
</dbReference>
<dbReference type="EMBL" id="BK006941">
    <property type="protein sequence ID" value="DAA08022.1"/>
    <property type="molecule type" value="Genomic_DNA"/>
</dbReference>
<dbReference type="PIR" id="S64090">
    <property type="entry name" value="S64090"/>
</dbReference>
<dbReference type="RefSeq" id="NP_011432.1">
    <property type="nucleotide sequence ID" value="NM_001180948.1"/>
</dbReference>
<dbReference type="SMR" id="P53009"/>
<dbReference type="BioGRID" id="33167">
    <property type="interactions" value="58"/>
</dbReference>
<dbReference type="DIP" id="DIP-4400N"/>
<dbReference type="FunCoup" id="P53009">
    <property type="interactions" value="1031"/>
</dbReference>
<dbReference type="IntAct" id="P53009">
    <property type="interactions" value="2"/>
</dbReference>
<dbReference type="STRING" id="4932.YGL083W"/>
<dbReference type="GlyGen" id="P53009">
    <property type="glycosylation" value="2 sites, 1 O-linked glycan (1 site)"/>
</dbReference>
<dbReference type="iPTMnet" id="P53009"/>
<dbReference type="PaxDb" id="4932-YGL083W"/>
<dbReference type="PeptideAtlas" id="P53009"/>
<dbReference type="EnsemblFungi" id="YGL083W_mRNA">
    <property type="protein sequence ID" value="YGL083W"/>
    <property type="gene ID" value="YGL083W"/>
</dbReference>
<dbReference type="GeneID" id="852797"/>
<dbReference type="KEGG" id="sce:YGL083W"/>
<dbReference type="AGR" id="SGD:S000003051"/>
<dbReference type="SGD" id="S000003051">
    <property type="gene designation" value="SCY1"/>
</dbReference>
<dbReference type="VEuPathDB" id="FungiDB:YGL083W"/>
<dbReference type="eggNOG" id="KOG2137">
    <property type="taxonomic scope" value="Eukaryota"/>
</dbReference>
<dbReference type="GeneTree" id="ENSGT00880000138031"/>
<dbReference type="HOGENOM" id="CLU_008724_3_0_1"/>
<dbReference type="InParanoid" id="P53009"/>
<dbReference type="OMA" id="MAHKCIP"/>
<dbReference type="OrthoDB" id="79687at2759"/>
<dbReference type="BioCyc" id="YEAST:G3O-30584-MONOMER"/>
<dbReference type="BioGRID-ORCS" id="852797">
    <property type="hits" value="2 hits in 13 CRISPR screens"/>
</dbReference>
<dbReference type="PRO" id="PR:P53009"/>
<dbReference type="Proteomes" id="UP000002311">
    <property type="component" value="Chromosome VII"/>
</dbReference>
<dbReference type="RNAct" id="P53009">
    <property type="molecule type" value="protein"/>
</dbReference>
<dbReference type="GO" id="GO:0005829">
    <property type="term" value="C:cytosol"/>
    <property type="evidence" value="ECO:0007005"/>
    <property type="project" value="SGD"/>
</dbReference>
<dbReference type="GO" id="GO:0005759">
    <property type="term" value="C:mitochondrial matrix"/>
    <property type="evidence" value="ECO:0000314"/>
    <property type="project" value="SGD"/>
</dbReference>
<dbReference type="GO" id="GO:0005524">
    <property type="term" value="F:ATP binding"/>
    <property type="evidence" value="ECO:0007669"/>
    <property type="project" value="InterPro"/>
</dbReference>
<dbReference type="GO" id="GO:0004672">
    <property type="term" value="F:protein kinase activity"/>
    <property type="evidence" value="ECO:0007669"/>
    <property type="project" value="InterPro"/>
</dbReference>
<dbReference type="CDD" id="cd14011">
    <property type="entry name" value="PK_SCY1_like"/>
    <property type="match status" value="1"/>
</dbReference>
<dbReference type="FunFam" id="1.10.510.10:FF:001116">
    <property type="entry name" value="Scy1p"/>
    <property type="match status" value="1"/>
</dbReference>
<dbReference type="FunFam" id="1.25.10.10:FF:001090">
    <property type="entry name" value="Scy1p"/>
    <property type="match status" value="1"/>
</dbReference>
<dbReference type="Gene3D" id="1.25.10.10">
    <property type="entry name" value="Leucine-rich Repeat Variant"/>
    <property type="match status" value="1"/>
</dbReference>
<dbReference type="Gene3D" id="3.30.200.20">
    <property type="entry name" value="Phosphorylase Kinase, domain 1"/>
    <property type="match status" value="1"/>
</dbReference>
<dbReference type="Gene3D" id="1.10.510.10">
    <property type="entry name" value="Transferase(Phosphotransferase) domain 1"/>
    <property type="match status" value="1"/>
</dbReference>
<dbReference type="InterPro" id="IPR011989">
    <property type="entry name" value="ARM-like"/>
</dbReference>
<dbReference type="InterPro" id="IPR016024">
    <property type="entry name" value="ARM-type_fold"/>
</dbReference>
<dbReference type="InterPro" id="IPR051177">
    <property type="entry name" value="CIK-Related_Protein"/>
</dbReference>
<dbReference type="InterPro" id="IPR011009">
    <property type="entry name" value="Kinase-like_dom_sf"/>
</dbReference>
<dbReference type="InterPro" id="IPR000719">
    <property type="entry name" value="Prot_kinase_dom"/>
</dbReference>
<dbReference type="PANTHER" id="PTHR12984:SF6">
    <property type="entry name" value="SCY1-LIKE PROTEIN 2"/>
    <property type="match status" value="1"/>
</dbReference>
<dbReference type="PANTHER" id="PTHR12984">
    <property type="entry name" value="SCY1-RELATED S/T PROTEIN KINASE-LIKE"/>
    <property type="match status" value="1"/>
</dbReference>
<dbReference type="Pfam" id="PF00069">
    <property type="entry name" value="Pkinase"/>
    <property type="match status" value="1"/>
</dbReference>
<dbReference type="SMART" id="SM00220">
    <property type="entry name" value="S_TKc"/>
    <property type="match status" value="1"/>
</dbReference>
<dbReference type="SUPFAM" id="SSF48371">
    <property type="entry name" value="ARM repeat"/>
    <property type="match status" value="1"/>
</dbReference>
<dbReference type="SUPFAM" id="SSF56112">
    <property type="entry name" value="Protein kinase-like (PK-like)"/>
    <property type="match status" value="1"/>
</dbReference>
<dbReference type="PROSITE" id="PS50011">
    <property type="entry name" value="PROTEIN_KINASE_DOM"/>
    <property type="match status" value="1"/>
</dbReference>
<proteinExistence type="evidence at protein level"/>
<sequence length="804" mass="91001">MMFWSSKTGITSKYSFSSSPTFTAEPWSIYTGRPKSSSSSSPSKVSIFMFDKKQFENYLLHYGIIKSKSGSRDKVLIQEAYEILRNQANNLAKLKHPNILTLIEPLEEHSKNFMFVTEFVTSSLETVFRETDDEEQNFLQGHVKDNIVVQRGILQLVNALDFVHNRASFVHLNIQPRAIFINENSDWKISGLGYLVKIPPGTNTSEYFLPQYDPRVPPFMHLQLNYTAPEIVFENTLTFKNDYFSLGLLIYFLYTGKDLFRSENSTSEYKLEYNKFESKISTMSWDNIFSKVPQKLRHCIPKLINRDIYSRYDNITLILDSEFFQDPLVKTLNFLDDLPTKNNEEKYVFLEGLVNLLPEFPPALLQKKFLPILLELLSQFCAEKVVSDKCVGKSLDLIIKIGSTLSQLSFQEKVYPVLLSDANFPVLLKKATICLIDNLDTLKQKVKRSDFLENILKPLFNYVLHDSESDITVVCQEKLLSQIPLALEVLDFPTVKQFLLPLLSNLFTKTTSLTVKNTCVTCFQIMIEHKSIDSYTCSETVLPLFKSMKTRDPRILSKLLKLFETVPLIITDEIVLVDQVLPLMWNYSMASTLTKSQYSGYTKAINKMSSDIQKHHIAKLDDKVNDIGEDAFHKVIEPTIMKKEDPETVAAKNIEVAAMQPVKKKTGSSYGETLPQSKSILNSKPLNPKNALATRGFPTRILNSPPQTPSSRTGSKVMTKGGSNDASSTKVEEEFNEFQSFSSTGSIRQTSAPSDVWMNSTPSPTPTSASSTNLPPGFSISLQPNKRKDGSSDIPRSNVYGSLI</sequence>